<name>UBR1_YEAST</name>
<accession>P19812</accession>
<accession>D6VUW7</accession>
<sequence>MSVADDDLGSLQGHIRRTLRSIHNLPYFRYTRGPTERADMSRALKEFIYRYLYFVISNSGENLPTLFNAHPKQKLSNPELTVFPDSLEDAVDIDKITSQQTIPFYKIDESRIGDVHKHTGRNCGRKFKIGEPLYRCHECGCDDTCVLCIHCFNPKDHVNHHVCTDICTEFTSGICDCGDEEAWNSPLHCKAEEQENDISEDPATNADIKEEDVWNDSVNIALVELVLAEVFDYFIDVFNQNIEPLPTIQKDITIKLREMTQQGKMYERAQFLNDLKYENDYMFDGTTTAKTSPSNSPEASPSLAKIDPENYTVIIYNDEYHNYSQATTALRQGVPDNVHIDLLTSRIDGEGRAMLKCSQDLSSVLGGFFAVQTNGLSATLTSWSEYLHQETCKYIILWITHCLNIPNSSFQTTFRNMMGKTLCSEYLNATECRDMTPVVEKYFSNKFDKNDPYRYIDLSILADGNQIPLGHHKILPESSTHSLSPLINDVETPTSRTYSNTRLQHILYFDNRYWKRLRKDIQNVIIPTLASSNLYKPIFCQQVVEIFNHITRSVAYMDREPQLTAIRECVVQLFTCPTNAKNIFENQSFLDIVWSIIDIFKEFCKVEGGVLIWQRVQKSNLTKSYSISFKQGLYTVETLLSKVHDPNIPLRPKEIISLLTLCKLFNGAWKIKRKEGEHVLHEDQNFISYLEYTTSIYSIIQTAEKVSEKSKDSIDSKLFLNAIRIISSFLGNRSLTYKLIYDSHEVIKFSVSHERVAFMNPLQTMLSFLIEKVSLKDAYEALEDCSDFLKISDFSLRSVVLCSQIDVGFWVRNGMSVLHQASYYKNNPELGSYSRDIHLNQLAILWERDDIPRIIYNILDRWELLDWFTGEVDYQHTVYEDKISFIIQQFIAFIYQILTERQYFKTFSSLKDRRMDQIKNSIIYNLYMKPLSYSKLLRSVPDYLTEDTTEFDEALEEVSVFVEPKGLADNGVFKLKASLYAKVDPLKLLNLENEFESSATIIKSHLAKDKDEIAKVVLIPQVSIKQLDKDALNLGAFTRNTVFAKVVYKLLQVCLDMEDSTFLNELLHLVHGIFRDDELINGKDSIPEAYLSKPICNLLLSIANAKSDVFSESIVRKADYLLEKMIMKKPNELFESLIASFGNQYVNDYKDKKLRQGVNLQETEKERKRRLAKKHQARLLAKFNNQQTKFMKEHESEFDEQDNDVDMVGEKVYESEDFTCALCQDSSSTDFFVIPAYHDHSPIFRPGNIFNPNEFMPMWDGFYNDDEKQAYIDDDVLEALKENGSCGSRKVFVSCNHHIHHNCFKRYVQKKRFSSNAFICPLCQTFSNCTLPLCQTSKANTGLSLDMFLESELSLDTLSRLFKPFTEENYRTINSIFSLMISQCQGFDKAVRKRANFSHKDVSLILSVHWANTISMLEIASRLEKPYSISFFRSREQKYKTLKNILVCIMLFTFVIGKPSMEFEPYPQQPDTVWNQNQLFQYIVRSALFSPVSLRQTVTEALTTFSRQFLRDFLQGLSDAEQVTKLYAKASKIGDVLKVSEQMLFALRTISDVRMEGLDSESIIYDLAYTFLLKSLLPTIRRCLVFIKVLHELVKDSENETLVINGHEVEEELEFEDTAEFVNKALKMITEKESLVDLLTTQESIVSHPYLENIPYEYCGIIKLIDLSKYLNTYVTQSKEIKLREERSQHMKNADNRLDFKICLTCGVKVHLRADRHEMTKHLNKNCFKPFGAFLMPNSSEVCLHLTQPPSNIFISAPYLNSHGEVGRNAMRRGDLTTLNLKRYEHLNRLWINNEIPGYISRVMGDEFRVTILSNGFLFAFNREPRPRRIPPTDEDDEDMEEGEDGFFTEGNDEMDVDDETGQAANLFGVGAEGIAGGGVRDFFQFFENFRNTLQPQGNGDDDAPQNPPPILQFLGPQFDGATIIRNTNPRNLDEDDSDDNDDSDEREIW</sequence>
<dbReference type="EC" id="2.3.2.27" evidence="3 8"/>
<dbReference type="EMBL" id="X53747">
    <property type="protein sequence ID" value="CAA37779.1"/>
    <property type="molecule type" value="Genomic_DNA"/>
</dbReference>
<dbReference type="EMBL" id="X99074">
    <property type="protein sequence ID" value="CAA67528.1"/>
    <property type="molecule type" value="Genomic_DNA"/>
</dbReference>
<dbReference type="EMBL" id="Z72969">
    <property type="protein sequence ID" value="CAA97210.1"/>
    <property type="molecule type" value="Genomic_DNA"/>
</dbReference>
<dbReference type="EMBL" id="BK006941">
    <property type="protein sequence ID" value="DAA08278.1"/>
    <property type="molecule type" value="Genomic_DNA"/>
</dbReference>
<dbReference type="PIR" id="S12332">
    <property type="entry name" value="S12332"/>
</dbReference>
<dbReference type="RefSeq" id="NP_011700.1">
    <property type="nucleotide sequence ID" value="NM_001181313.1"/>
</dbReference>
<dbReference type="PDB" id="3NIH">
    <property type="method" value="X-ray"/>
    <property type="resolution" value="2.10 A"/>
    <property type="chains" value="A=115-194"/>
</dbReference>
<dbReference type="PDB" id="3NII">
    <property type="method" value="X-ray"/>
    <property type="resolution" value="2.10 A"/>
    <property type="chains" value="A=115-194"/>
</dbReference>
<dbReference type="PDB" id="3NIJ">
    <property type="method" value="X-ray"/>
    <property type="resolution" value="2.10 A"/>
    <property type="chains" value="A=115-194"/>
</dbReference>
<dbReference type="PDB" id="3NIK">
    <property type="method" value="X-ray"/>
    <property type="resolution" value="1.85 A"/>
    <property type="chains" value="A/B/D/F=115-194"/>
</dbReference>
<dbReference type="PDB" id="3NIL">
    <property type="method" value="X-ray"/>
    <property type="resolution" value="1.75 A"/>
    <property type="chains" value="A/B/D/F=115-194"/>
</dbReference>
<dbReference type="PDB" id="3NIM">
    <property type="method" value="X-ray"/>
    <property type="resolution" value="2.00 A"/>
    <property type="chains" value="A/B/D/F=115-194"/>
</dbReference>
<dbReference type="PDB" id="3NIN">
    <property type="method" value="X-ray"/>
    <property type="resolution" value="2.10 A"/>
    <property type="chains" value="A/B=115-194"/>
</dbReference>
<dbReference type="PDB" id="3NIS">
    <property type="method" value="X-ray"/>
    <property type="resolution" value="1.68 A"/>
    <property type="chains" value="A/B/D/F=115-194"/>
</dbReference>
<dbReference type="PDB" id="3NIT">
    <property type="method" value="X-ray"/>
    <property type="resolution" value="2.60 A"/>
    <property type="chains" value="A=107-194"/>
</dbReference>
<dbReference type="PDB" id="6KGI">
    <property type="method" value="X-ray"/>
    <property type="resolution" value="1.04 A"/>
    <property type="chains" value="B=113-194"/>
</dbReference>
<dbReference type="PDB" id="7MEX">
    <property type="method" value="EM"/>
    <property type="resolution" value="3.35 A"/>
    <property type="chains" value="A=1-1950"/>
</dbReference>
<dbReference type="PDB" id="7MEY">
    <property type="method" value="EM"/>
    <property type="resolution" value="3.67 A"/>
    <property type="chains" value="A=1-1950"/>
</dbReference>
<dbReference type="PDBsum" id="3NIH"/>
<dbReference type="PDBsum" id="3NII"/>
<dbReference type="PDBsum" id="3NIJ"/>
<dbReference type="PDBsum" id="3NIK"/>
<dbReference type="PDBsum" id="3NIL"/>
<dbReference type="PDBsum" id="3NIM"/>
<dbReference type="PDBsum" id="3NIN"/>
<dbReference type="PDBsum" id="3NIS"/>
<dbReference type="PDBsum" id="3NIT"/>
<dbReference type="PDBsum" id="6KGI"/>
<dbReference type="PDBsum" id="7MEX"/>
<dbReference type="PDBsum" id="7MEY"/>
<dbReference type="EMDB" id="EMD-23806"/>
<dbReference type="EMDB" id="EMD-23807"/>
<dbReference type="SMR" id="P19812"/>
<dbReference type="BioGRID" id="33436">
    <property type="interactions" value="258"/>
</dbReference>
<dbReference type="ComplexPortal" id="CPX-2918">
    <property type="entry name" value="UBR1-RAD6 ubiquitin ligase complex"/>
</dbReference>
<dbReference type="DIP" id="DIP-2517N"/>
<dbReference type="FunCoup" id="P19812">
    <property type="interactions" value="812"/>
</dbReference>
<dbReference type="IntAct" id="P19812">
    <property type="interactions" value="18"/>
</dbReference>
<dbReference type="MINT" id="P19812"/>
<dbReference type="STRING" id="4932.YGR184C"/>
<dbReference type="iPTMnet" id="P19812"/>
<dbReference type="PaxDb" id="4932-YGR184C"/>
<dbReference type="PeptideAtlas" id="P19812"/>
<dbReference type="EnsemblFungi" id="YGR184C_mRNA">
    <property type="protein sequence ID" value="YGR184C"/>
    <property type="gene ID" value="YGR184C"/>
</dbReference>
<dbReference type="GeneID" id="853096"/>
<dbReference type="KEGG" id="sce:YGR184C"/>
<dbReference type="AGR" id="SGD:S000003416"/>
<dbReference type="SGD" id="S000003416">
    <property type="gene designation" value="UBR1"/>
</dbReference>
<dbReference type="VEuPathDB" id="FungiDB:YGR184C"/>
<dbReference type="eggNOG" id="KOG1140">
    <property type="taxonomic scope" value="Eukaryota"/>
</dbReference>
<dbReference type="GeneTree" id="ENSGT00950000183075"/>
<dbReference type="HOGENOM" id="CLU_238060_0_0_1"/>
<dbReference type="InParanoid" id="P19812"/>
<dbReference type="OMA" id="WANTISM"/>
<dbReference type="OrthoDB" id="26387at2759"/>
<dbReference type="BioCyc" id="YEAST:G3O-30874-MONOMER"/>
<dbReference type="BRENDA" id="2.3.2.26">
    <property type="organism ID" value="984"/>
</dbReference>
<dbReference type="Reactome" id="R-SCE-983168">
    <property type="pathway name" value="Antigen processing: Ubiquitination &amp; Proteasome degradation"/>
</dbReference>
<dbReference type="UniPathway" id="UPA00143"/>
<dbReference type="BioGRID-ORCS" id="853096">
    <property type="hits" value="3 hits in 10 CRISPR screens"/>
</dbReference>
<dbReference type="EvolutionaryTrace" id="P19812"/>
<dbReference type="PRO" id="PR:P19812"/>
<dbReference type="Proteomes" id="UP000002311">
    <property type="component" value="Chromosome VII"/>
</dbReference>
<dbReference type="RNAct" id="P19812">
    <property type="molecule type" value="protein"/>
</dbReference>
<dbReference type="GO" id="GO:0005737">
    <property type="term" value="C:cytoplasm"/>
    <property type="evidence" value="ECO:0000315"/>
    <property type="project" value="SGD"/>
</dbReference>
<dbReference type="GO" id="GO:0008540">
    <property type="term" value="C:proteasome regulatory particle, base subcomplex"/>
    <property type="evidence" value="ECO:0000353"/>
    <property type="project" value="SGD"/>
</dbReference>
<dbReference type="GO" id="GO:0000151">
    <property type="term" value="C:ubiquitin ligase complex"/>
    <property type="evidence" value="ECO:0000318"/>
    <property type="project" value="GO_Central"/>
</dbReference>
<dbReference type="GO" id="GO:1990303">
    <property type="term" value="C:UBR1-RAD6 ubiquitin ligase complex"/>
    <property type="evidence" value="ECO:0000314"/>
    <property type="project" value="UniProtKB"/>
</dbReference>
<dbReference type="GO" id="GO:1904855">
    <property type="term" value="F:proteasome regulatory particle binding"/>
    <property type="evidence" value="ECO:0000353"/>
    <property type="project" value="SGD"/>
</dbReference>
<dbReference type="GO" id="GO:0061630">
    <property type="term" value="F:ubiquitin protein ligase activity"/>
    <property type="evidence" value="ECO:0000314"/>
    <property type="project" value="UniProtKB"/>
</dbReference>
<dbReference type="GO" id="GO:0004842">
    <property type="term" value="F:ubiquitin-protein transferase activity"/>
    <property type="evidence" value="ECO:0000315"/>
    <property type="project" value="SGD"/>
</dbReference>
<dbReference type="GO" id="GO:0008270">
    <property type="term" value="F:zinc ion binding"/>
    <property type="evidence" value="ECO:0007669"/>
    <property type="project" value="UniProtKB-KW"/>
</dbReference>
<dbReference type="GO" id="GO:0034620">
    <property type="term" value="P:cellular response to unfolded protein"/>
    <property type="evidence" value="ECO:0000315"/>
    <property type="project" value="SGD"/>
</dbReference>
<dbReference type="GO" id="GO:0071629">
    <property type="term" value="P:cytoplasm protein quality control by the ubiquitin-proteasome system"/>
    <property type="evidence" value="ECO:0000314"/>
    <property type="project" value="UniProtKB"/>
</dbReference>
<dbReference type="GO" id="GO:0036503">
    <property type="term" value="P:ERAD pathway"/>
    <property type="evidence" value="ECO:0000315"/>
    <property type="project" value="SGD"/>
</dbReference>
<dbReference type="GO" id="GO:0072671">
    <property type="term" value="P:mitochondria-associated ubiquitin-dependent protein catabolic process"/>
    <property type="evidence" value="ECO:0000315"/>
    <property type="project" value="SGD"/>
</dbReference>
<dbReference type="GO" id="GO:0006513">
    <property type="term" value="P:protein monoubiquitination"/>
    <property type="evidence" value="ECO:0000314"/>
    <property type="project" value="SGD"/>
</dbReference>
<dbReference type="GO" id="GO:0000209">
    <property type="term" value="P:protein polyubiquitination"/>
    <property type="evidence" value="ECO:0000314"/>
    <property type="project" value="UniProtKB"/>
</dbReference>
<dbReference type="GO" id="GO:0016567">
    <property type="term" value="P:protein ubiquitination"/>
    <property type="evidence" value="ECO:0000318"/>
    <property type="project" value="GO_Central"/>
</dbReference>
<dbReference type="GO" id="GO:0090089">
    <property type="term" value="P:regulation of dipeptide transport"/>
    <property type="evidence" value="ECO:0000315"/>
    <property type="project" value="SGD"/>
</dbReference>
<dbReference type="GO" id="GO:1990116">
    <property type="term" value="P:ribosome-associated ubiquitin-dependent protein catabolic process"/>
    <property type="evidence" value="ECO:0000315"/>
    <property type="project" value="SGD"/>
</dbReference>
<dbReference type="GO" id="GO:0120174">
    <property type="term" value="P:stress-induced homeostatically regulated protein degradation pathway"/>
    <property type="evidence" value="ECO:0000315"/>
    <property type="project" value="SGD"/>
</dbReference>
<dbReference type="GO" id="GO:0071596">
    <property type="term" value="P:ubiquitin-dependent protein catabolic process via the N-end rule pathway"/>
    <property type="evidence" value="ECO:0000314"/>
    <property type="project" value="UniProtKB"/>
</dbReference>
<dbReference type="CDD" id="cd16482">
    <property type="entry name" value="RING-H2_UBR1-like"/>
    <property type="match status" value="1"/>
</dbReference>
<dbReference type="CDD" id="cd19672">
    <property type="entry name" value="UBR-box_UBR1_like"/>
    <property type="match status" value="1"/>
</dbReference>
<dbReference type="FunFam" id="2.10.110.30:FF:000002">
    <property type="entry name" value="Putative e3 ubiquitin-protein ligase ubr3"/>
    <property type="match status" value="1"/>
</dbReference>
<dbReference type="Gene3D" id="2.10.110.30">
    <property type="match status" value="1"/>
</dbReference>
<dbReference type="InterPro" id="IPR044046">
    <property type="entry name" value="E3_ligase_UBR-like_C"/>
</dbReference>
<dbReference type="InterPro" id="IPR039164">
    <property type="entry name" value="UBR1-like"/>
</dbReference>
<dbReference type="InterPro" id="IPR055194">
    <property type="entry name" value="UBR1-like_winged-helix"/>
</dbReference>
<dbReference type="InterPro" id="IPR003126">
    <property type="entry name" value="Znf_UBR"/>
</dbReference>
<dbReference type="PANTHER" id="PTHR21497:SF26">
    <property type="entry name" value="E3 UBIQUITIN-PROTEIN LIGASE UBR1"/>
    <property type="match status" value="1"/>
</dbReference>
<dbReference type="PANTHER" id="PTHR21497">
    <property type="entry name" value="UBIQUITIN LIGASE E3 ALPHA-RELATED"/>
    <property type="match status" value="1"/>
</dbReference>
<dbReference type="Pfam" id="PF18995">
    <property type="entry name" value="PRT6_C"/>
    <property type="match status" value="1"/>
</dbReference>
<dbReference type="Pfam" id="PF22960">
    <property type="entry name" value="UBR1-like_wing"/>
    <property type="match status" value="1"/>
</dbReference>
<dbReference type="Pfam" id="PF02207">
    <property type="entry name" value="zf-UBR"/>
    <property type="match status" value="1"/>
</dbReference>
<dbReference type="SMART" id="SM00396">
    <property type="entry name" value="ZnF_UBR1"/>
    <property type="match status" value="1"/>
</dbReference>
<dbReference type="PROSITE" id="PS51157">
    <property type="entry name" value="ZF_UBR"/>
    <property type="match status" value="1"/>
</dbReference>
<feature type="chain" id="PRO_0000056135" description="E3 ubiquitin-protein ligase UBR1">
    <location>
        <begin position="1"/>
        <end position="1950"/>
    </location>
</feature>
<feature type="zinc finger region" description="UBR-type" evidence="1">
    <location>
        <begin position="121"/>
        <end position="194"/>
    </location>
</feature>
<feature type="zinc finger region" description="RING-type; atypical" evidence="12">
    <location>
        <begin position="1220"/>
        <end position="1324"/>
    </location>
</feature>
<feature type="region of interest" description="Ubiquitin-binding loop" evidence="8">
    <location>
        <begin position="678"/>
        <end position="681"/>
    </location>
</feature>
<feature type="region of interest" description="UBC2-binding region (U2BR)" evidence="8 11">
    <location>
        <begin position="1165"/>
        <end position="1200"/>
    </location>
</feature>
<feature type="region of interest" description="Cap helical domain (CHD)" evidence="8">
    <location>
        <begin position="1333"/>
        <end position="1665"/>
    </location>
</feature>
<feature type="region of interest" description="Disordered" evidence="2">
    <location>
        <begin position="1826"/>
        <end position="1846"/>
    </location>
</feature>
<feature type="region of interest" description="Disordered" evidence="2">
    <location>
        <begin position="1893"/>
        <end position="1950"/>
    </location>
</feature>
<feature type="compositionally biased region" description="Acidic residues" evidence="2">
    <location>
        <begin position="1833"/>
        <end position="1846"/>
    </location>
</feature>
<feature type="compositionally biased region" description="Acidic residues" evidence="2">
    <location>
        <begin position="1934"/>
        <end position="1950"/>
    </location>
</feature>
<feature type="binding site" evidence="8 14 15">
    <location>
        <position position="118"/>
    </location>
    <ligand>
        <name>Zn(2+)</name>
        <dbReference type="ChEBI" id="CHEBI:29105"/>
        <label>1</label>
    </ligand>
</feature>
<feature type="binding site" evidence="8 14 15">
    <location>
        <position position="123"/>
    </location>
    <ligand>
        <name>Zn(2+)</name>
        <dbReference type="ChEBI" id="CHEBI:29105"/>
        <label>2</label>
    </ligand>
</feature>
<feature type="binding site" evidence="8 14 15">
    <location>
        <position position="136"/>
    </location>
    <ligand>
        <name>Zn(2+)</name>
        <dbReference type="ChEBI" id="CHEBI:29105"/>
        <label>3</label>
    </ligand>
</feature>
<feature type="binding site" evidence="8 14 15">
    <location>
        <position position="139"/>
    </location>
    <ligand>
        <name>Zn(2+)</name>
        <dbReference type="ChEBI" id="CHEBI:29105"/>
        <label>3</label>
    </ligand>
</feature>
<feature type="binding site" evidence="8 14 15">
    <location>
        <position position="148"/>
    </location>
    <ligand>
        <name>Zn(2+)</name>
        <dbReference type="ChEBI" id="CHEBI:29105"/>
        <label>2</label>
    </ligand>
</feature>
<feature type="binding site" evidence="8 14 15">
    <location>
        <position position="151"/>
    </location>
    <ligand>
        <name>Zn(2+)</name>
        <dbReference type="ChEBI" id="CHEBI:29105"/>
        <label>1</label>
    </ligand>
</feature>
<feature type="binding site" evidence="8 14 15">
    <location>
        <position position="151"/>
    </location>
    <ligand>
        <name>Zn(2+)</name>
        <dbReference type="ChEBI" id="CHEBI:29105"/>
        <label>2</label>
    </ligand>
</feature>
<feature type="binding site" evidence="8 14 15">
    <location>
        <position position="157"/>
    </location>
    <ligand>
        <name>Zn(2+)</name>
        <dbReference type="ChEBI" id="CHEBI:29105"/>
        <label>3</label>
    </ligand>
</feature>
<feature type="binding site" evidence="8 14 15">
    <location>
        <position position="160"/>
    </location>
    <ligand>
        <name>Zn(2+)</name>
        <dbReference type="ChEBI" id="CHEBI:29105"/>
        <label>3</label>
    </ligand>
</feature>
<feature type="binding site" evidence="8 14 15">
    <location>
        <position position="161"/>
    </location>
    <ligand>
        <name>Zn(2+)</name>
        <dbReference type="ChEBI" id="CHEBI:29105"/>
        <label>4</label>
    </ligand>
</feature>
<feature type="binding site" evidence="8 14 15">
    <location>
        <position position="175"/>
    </location>
    <ligand>
        <name>Zn(2+)</name>
        <dbReference type="ChEBI" id="CHEBI:29105"/>
        <label>2</label>
    </ligand>
</feature>
<feature type="binding site" evidence="8 14 15">
    <location>
        <position position="177"/>
    </location>
    <ligand>
        <name>Zn(2+)</name>
        <dbReference type="ChEBI" id="CHEBI:29105"/>
        <label>1</label>
    </ligand>
</feature>
<feature type="binding site" evidence="8 14 15">
    <location>
        <position position="189"/>
    </location>
    <ligand>
        <name>Zn(2+)</name>
        <dbReference type="ChEBI" id="CHEBI:29105"/>
        <label>1</label>
    </ligand>
</feature>
<feature type="binding site" evidence="8 14 15">
    <location>
        <position position="952"/>
    </location>
    <ligand>
        <name>Zn(2+)</name>
        <dbReference type="ChEBI" id="CHEBI:29105"/>
        <label>4</label>
    </ligand>
</feature>
<feature type="binding site" evidence="8 14 15">
    <location>
        <position position="1220"/>
    </location>
    <ligand>
        <name>Zn(2+)</name>
        <dbReference type="ChEBI" id="CHEBI:29105"/>
        <label>5</label>
    </ligand>
</feature>
<feature type="binding site" evidence="8 14 15">
    <location>
        <position position="1223"/>
    </location>
    <ligand>
        <name>Zn(2+)</name>
        <dbReference type="ChEBI" id="CHEBI:29105"/>
        <label>5</label>
    </ligand>
</feature>
<feature type="binding site" evidence="8 14 15">
    <location>
        <position position="1295"/>
    </location>
    <ligand>
        <name>Zn(2+)</name>
        <dbReference type="ChEBI" id="CHEBI:29105"/>
        <label>6</label>
    </ligand>
</feature>
<feature type="binding site" evidence="8 14 15">
    <location>
        <position position="1297"/>
    </location>
    <ligand>
        <name>Zn(2+)</name>
        <dbReference type="ChEBI" id="CHEBI:29105"/>
        <label>6</label>
    </ligand>
</feature>
<feature type="binding site" evidence="8 14 15">
    <location>
        <position position="1300"/>
    </location>
    <ligand>
        <name>Zn(2+)</name>
        <dbReference type="ChEBI" id="CHEBI:29105"/>
        <label>5</label>
    </ligand>
</feature>
<feature type="binding site" evidence="8 14 15">
    <location>
        <position position="1303"/>
    </location>
    <ligand>
        <name>Zn(2+)</name>
        <dbReference type="ChEBI" id="CHEBI:29105"/>
        <label>5</label>
    </ligand>
</feature>
<feature type="binding site" evidence="8 14 15">
    <location>
        <position position="1320"/>
    </location>
    <ligand>
        <name>Zn(2+)</name>
        <dbReference type="ChEBI" id="CHEBI:29105"/>
        <label>6</label>
    </ligand>
</feature>
<feature type="binding site" evidence="8 14 15">
    <location>
        <position position="1323"/>
    </location>
    <ligand>
        <name>Zn(2+)</name>
        <dbReference type="ChEBI" id="CHEBI:29105"/>
        <label>6</label>
    </ligand>
</feature>
<feature type="binding site" evidence="8 14 15">
    <location>
        <position position="1703"/>
    </location>
    <ligand>
        <name>Zn(2+)</name>
        <dbReference type="ChEBI" id="CHEBI:29105"/>
        <label>7</label>
    </ligand>
</feature>
<feature type="binding site" evidence="8 14 15">
    <location>
        <position position="1706"/>
    </location>
    <ligand>
        <name>Zn(2+)</name>
        <dbReference type="ChEBI" id="CHEBI:29105"/>
        <label>7</label>
    </ligand>
</feature>
<feature type="binding site" evidence="8 14 15">
    <location>
        <position position="1722"/>
    </location>
    <ligand>
        <name>Zn(2+)</name>
        <dbReference type="ChEBI" id="CHEBI:29105"/>
        <label>7</label>
    </ligand>
</feature>
<feature type="binding site" evidence="8 14 15">
    <location>
        <position position="1727"/>
    </location>
    <ligand>
        <name>Zn(2+)</name>
        <dbReference type="ChEBI" id="CHEBI:29105"/>
        <label>7</label>
    </ligand>
</feature>
<feature type="binding site" evidence="8 14 15">
    <location>
        <position position="1763"/>
    </location>
    <ligand>
        <name>Zn(2+)</name>
        <dbReference type="ChEBI" id="CHEBI:29105"/>
        <label>4</label>
    </ligand>
</feature>
<feature type="binding site" evidence="8 14 15">
    <location>
        <position position="1775"/>
    </location>
    <ligand>
        <name>Zn(2+)</name>
        <dbReference type="ChEBI" id="CHEBI:29105"/>
        <label>4</label>
    </ligand>
</feature>
<feature type="modified residue" description="Phosphoserine" evidence="16 17 18">
    <location>
        <position position="296"/>
    </location>
</feature>
<feature type="modified residue" description="Phosphoserine" evidence="16 18">
    <location>
        <position position="300"/>
    </location>
</feature>
<feature type="modified residue" description="Phosphoserine" evidence="18">
    <location>
        <position position="1938"/>
    </location>
</feature>
<feature type="mutagenesis site" description="Abolished ability to degrade proteins with type-1 N-degrons without affecting ability to degrade proteins with type-2 N-degrons." evidence="5">
    <original>CV</original>
    <variation>YM</variation>
    <location>
        <begin position="145"/>
        <end position="146"/>
    </location>
</feature>
<feature type="mutagenesis site" description="In DHHY mutant; abolished E3 ubiquitin protein ligase activity; when associated with A-933, A-1175 and A-1763." evidence="8">
    <original>H</original>
    <variation>A</variation>
    <location>
        <position position="161"/>
    </location>
</feature>
<feature type="mutagenesis site" description="Abolished ability to degrade proteins with type-1 N-degrons without affecting ability to degrade proteins with type-2 N-degrons." evidence="5">
    <original>G</original>
    <variation>R</variation>
    <variation>D</variation>
    <location>
        <position position="173"/>
    </location>
</feature>
<feature type="mutagenesis site" description="Abolished ability to degrade proteins with type-1 N-degrons without affecting ability to degrade proteins with type-2 N-degrons." evidence="5">
    <original>D</original>
    <variation>N</variation>
    <variation>E</variation>
    <location>
        <position position="176"/>
    </location>
</feature>
<feature type="mutagenesis site" description="Abolished ability to degrade proteins with type-2 N-degrons without affecting ability to degrade proteins with type-1 N-degrons." evidence="3">
    <original>V</original>
    <variation>I</variation>
    <location>
        <position position="313"/>
    </location>
</feature>
<feature type="mutagenesis site" description="Abolished ability to degrade proteins with type-2 N-degrons without affecting ability to degrade proteins with type-1 N-degrons." evidence="3">
    <original>D</original>
    <variation>N</variation>
    <location>
        <position position="318"/>
    </location>
</feature>
<feature type="mutagenesis site" description="Abolished ability to degrade proteins with type-2 N-degrons without affecting ability to degrade proteins with type-1 N-degrons." evidence="3">
    <original>H</original>
    <variation>Y</variation>
    <location>
        <position position="321"/>
    </location>
</feature>
<feature type="mutagenesis site" description="Abolished ability to degrade proteins with type-2 N-degrons without affecting ability to degrade proteins with type-1 N-degrons." evidence="3">
    <original>P</original>
    <variation>S</variation>
    <location>
        <position position="406"/>
    </location>
</feature>
<feature type="mutagenesis site" description="Abolished ability to degrade proteins with type-2 N-degrons without affecting ability to degrade proteins with type-1 N-degrons." evidence="3">
    <original>E</original>
    <variation>K</variation>
    <location>
        <position position="560"/>
    </location>
</feature>
<feature type="mutagenesis site" description="In UBLM mutant; strongly reduced ubiquitination of substrates." evidence="8">
    <original>HVLH</original>
    <variation>AAAA</variation>
    <location>
        <begin position="678"/>
        <end position="681"/>
    </location>
</feature>
<feature type="mutagenesis site" description="In DHHY mutant; abolished E3 ubiquitin protein ligase activity; when associated with A-161, A-1175 and A-1763." evidence="8">
    <original>Y</original>
    <variation>A</variation>
    <location>
        <position position="933"/>
    </location>
</feature>
<feature type="mutagenesis site" description="Impairs interaction with UBC2, but does not affect degradation of N-end rule substrates." evidence="3">
    <original>K</original>
    <variation>S</variation>
    <location>
        <position position="1168"/>
    </location>
</feature>
<feature type="mutagenesis site" description="Impairs interaction with UBC2, but does not affect degradation of N-end rule substrates." evidence="3">
    <original>R</original>
    <variation>L</variation>
    <location>
        <position position="1169"/>
    </location>
</feature>
<feature type="mutagenesis site" description="Impairs interaction with UBC2, but does not affect degradation of N-end rule substrates." evidence="3">
    <original>K</original>
    <variation>A</variation>
    <location>
        <position position="1173"/>
    </location>
</feature>
<feature type="mutagenesis site" description="In DHHY mutant; abolished E3 ubiquitin protein ligase activity; when associated with A-161, A-933 and A-1763. In FQFH mutant; strongly reduced N-end rule-dependent protein degradation; when associated with A-1183, A-1186 and A-1190." evidence="8">
    <original>H</original>
    <variation>A</variation>
    <location>
        <position position="1175"/>
    </location>
</feature>
<feature type="mutagenesis site" description="In FQFH mutant; strongly reduced N-end rule-dependent protein degradation; when associated with A-1175, A-1186 and A-1190." evidence="8">
    <original>F</original>
    <variation>A</variation>
    <location>
        <position position="1183"/>
    </location>
</feature>
<feature type="mutagenesis site" description="In FQFH mutant; strongly reduced N-end rule-dependent protein degradation; when associated with A-1175, A-1183 and A-1190." evidence="8">
    <original>Q</original>
    <variation>A</variation>
    <location>
        <position position="1186"/>
    </location>
</feature>
<feature type="mutagenesis site" description="In FQFH mutant; strongly reduced N-end rule-dependent protein degradation; when associated with A-1175, A-1183 and A-1186." evidence="8">
    <original>F</original>
    <variation>A</variation>
    <location>
        <position position="1190"/>
    </location>
</feature>
<feature type="mutagenesis site" description="No effect on interaction with UBC2, but inhibits degradation of N-end rule substrates." evidence="3">
    <original>C</original>
    <variation>S</variation>
    <location>
        <position position="1220"/>
    </location>
</feature>
<feature type="mutagenesis site" description="No effect on interaction with UBC2, but inhibits degradation of N-end rule substrates." evidence="3">
    <original>C</original>
    <variation>S</variation>
    <location>
        <position position="1223"/>
    </location>
</feature>
<feature type="mutagenesis site" description="No effect on interaction with UBC2, but inhibits degradation of N-end rule substrates." evidence="3">
    <original>C</original>
    <variation>S</variation>
    <location>
        <position position="1295"/>
    </location>
</feature>
<feature type="mutagenesis site" description="No effect on interaction with UBC2, but inhibits degradation of N-end rule substrates." evidence="3">
    <original>H</original>
    <variation>A</variation>
    <location>
        <position position="1297"/>
    </location>
</feature>
<feature type="mutagenesis site" description="No effect on interaction with UBC2, but inhibits degradation of N-end rule substrates." evidence="3">
    <original>C</original>
    <variation>S</variation>
    <location>
        <position position="1320"/>
    </location>
</feature>
<feature type="mutagenesis site" description="In DHHY mutant; abolished E3 ubiquitin protein ligase activity; when associated with A-161, A-933 and A-1175." evidence="8">
    <original>H</original>
    <variation>A</variation>
    <location>
        <position position="1763"/>
    </location>
</feature>
<feature type="helix" evidence="21">
    <location>
        <begin position="10"/>
        <end position="20"/>
    </location>
</feature>
<feature type="turn" evidence="21">
    <location>
        <begin position="26"/>
        <end position="28"/>
    </location>
</feature>
<feature type="helix" evidence="21">
    <location>
        <begin position="34"/>
        <end position="56"/>
    </location>
</feature>
<feature type="helix" evidence="21">
    <location>
        <begin position="58"/>
        <end position="60"/>
    </location>
</feature>
<feature type="helix" evidence="21">
    <location>
        <begin position="63"/>
        <end position="66"/>
    </location>
</feature>
<feature type="helix" evidence="21">
    <location>
        <begin position="88"/>
        <end position="91"/>
    </location>
</feature>
<feature type="helix" evidence="21">
    <location>
        <begin position="93"/>
        <end position="97"/>
    </location>
</feature>
<feature type="strand" evidence="21">
    <location>
        <begin position="119"/>
        <end position="121"/>
    </location>
</feature>
<feature type="strand" evidence="20">
    <location>
        <begin position="132"/>
        <end position="136"/>
    </location>
</feature>
<feature type="turn" evidence="20">
    <location>
        <begin position="137"/>
        <end position="139"/>
    </location>
</feature>
<feature type="strand" evidence="20">
    <location>
        <begin position="140"/>
        <end position="142"/>
    </location>
</feature>
<feature type="turn" evidence="20">
    <location>
        <begin position="149"/>
        <end position="151"/>
    </location>
</feature>
<feature type="helix" evidence="20">
    <location>
        <begin position="154"/>
        <end position="156"/>
    </location>
</feature>
<feature type="strand" evidence="20">
    <location>
        <begin position="162"/>
        <end position="166"/>
    </location>
</feature>
<feature type="strand" evidence="19">
    <location>
        <begin position="169"/>
        <end position="174"/>
    </location>
</feature>
<feature type="helix" evidence="20">
    <location>
        <begin position="180"/>
        <end position="182"/>
    </location>
</feature>
<feature type="strand" evidence="20">
    <location>
        <begin position="183"/>
        <end position="185"/>
    </location>
</feature>
<feature type="helix" evidence="20">
    <location>
        <begin position="190"/>
        <end position="192"/>
    </location>
</feature>
<feature type="strand" evidence="21">
    <location>
        <begin position="213"/>
        <end position="216"/>
    </location>
</feature>
<feature type="helix" evidence="21">
    <location>
        <begin position="217"/>
        <end position="239"/>
    </location>
</feature>
<feature type="helix" evidence="21">
    <location>
        <begin position="246"/>
        <end position="261"/>
    </location>
</feature>
<feature type="helix" evidence="21">
    <location>
        <begin position="265"/>
        <end position="275"/>
    </location>
</feature>
<feature type="strand" evidence="21">
    <location>
        <begin position="280"/>
        <end position="282"/>
    </location>
</feature>
<feature type="strand" evidence="21">
    <location>
        <begin position="309"/>
        <end position="316"/>
    </location>
</feature>
<feature type="strand" evidence="21">
    <location>
        <begin position="319"/>
        <end position="321"/>
    </location>
</feature>
<feature type="helix" evidence="21">
    <location>
        <begin position="323"/>
        <end position="333"/>
    </location>
</feature>
<feature type="turn" evidence="21">
    <location>
        <begin position="338"/>
        <end position="342"/>
    </location>
</feature>
<feature type="helix" evidence="21">
    <location>
        <begin position="343"/>
        <end position="348"/>
    </location>
</feature>
<feature type="strand" evidence="21">
    <location>
        <begin position="351"/>
        <end position="360"/>
    </location>
</feature>
<feature type="helix" evidence="21">
    <location>
        <begin position="361"/>
        <end position="368"/>
    </location>
</feature>
<feature type="helix" evidence="21">
    <location>
        <begin position="371"/>
        <end position="374"/>
    </location>
</feature>
<feature type="strand" evidence="21">
    <location>
        <begin position="377"/>
        <end position="382"/>
    </location>
</feature>
<feature type="helix" evidence="21">
    <location>
        <begin position="383"/>
        <end position="402"/>
    </location>
</feature>
<feature type="helix" evidence="21">
    <location>
        <begin position="408"/>
        <end position="423"/>
    </location>
</feature>
<feature type="turn" evidence="21">
    <location>
        <begin position="427"/>
        <end position="431"/>
    </location>
</feature>
<feature type="helix" evidence="21">
    <location>
        <begin position="436"/>
        <end position="442"/>
    </location>
</feature>
<feature type="helix" evidence="21">
    <location>
        <begin position="444"/>
        <end position="446"/>
    </location>
</feature>
<feature type="turn" evidence="21">
    <location>
        <begin position="452"/>
        <end position="455"/>
    </location>
</feature>
<feature type="helix" evidence="21">
    <location>
        <begin position="456"/>
        <end position="458"/>
    </location>
</feature>
<feature type="helix" evidence="21">
    <location>
        <begin position="477"/>
        <end position="479"/>
    </location>
</feature>
<feature type="strand" evidence="21">
    <location>
        <begin position="485"/>
        <end position="487"/>
    </location>
</feature>
<feature type="helix" evidence="21">
    <location>
        <begin position="502"/>
        <end position="508"/>
    </location>
</feature>
<feature type="helix" evidence="21">
    <location>
        <begin position="509"/>
        <end position="511"/>
    </location>
</feature>
<feature type="helix" evidence="21">
    <location>
        <begin position="515"/>
        <end position="531"/>
    </location>
</feature>
<feature type="turn" evidence="21">
    <location>
        <begin position="533"/>
        <end position="535"/>
    </location>
</feature>
<feature type="helix" evidence="21">
    <location>
        <begin position="536"/>
        <end position="545"/>
    </location>
</feature>
<feature type="helix" evidence="21">
    <location>
        <begin position="547"/>
        <end position="555"/>
    </location>
</feature>
<feature type="helix" evidence="21">
    <location>
        <begin position="561"/>
        <end position="563"/>
    </location>
</feature>
<feature type="helix" evidence="21">
    <location>
        <begin position="566"/>
        <end position="572"/>
    </location>
</feature>
<feature type="strand" evidence="21">
    <location>
        <begin position="574"/>
        <end position="576"/>
    </location>
</feature>
<feature type="helix" evidence="21">
    <location>
        <begin position="577"/>
        <end position="584"/>
    </location>
</feature>
<feature type="helix" evidence="21">
    <location>
        <begin position="588"/>
        <end position="600"/>
    </location>
</feature>
<feature type="strand" evidence="21">
    <location>
        <begin position="605"/>
        <end position="607"/>
    </location>
</feature>
<feature type="strand" evidence="21">
    <location>
        <begin position="610"/>
        <end position="612"/>
    </location>
</feature>
<feature type="helix" evidence="21">
    <location>
        <begin position="624"/>
        <end position="641"/>
    </location>
</feature>
<feature type="helix" evidence="21">
    <location>
        <begin position="648"/>
        <end position="650"/>
    </location>
</feature>
<feature type="helix" evidence="21">
    <location>
        <begin position="652"/>
        <end position="663"/>
    </location>
</feature>
<feature type="turn" evidence="21">
    <location>
        <begin position="664"/>
        <end position="667"/>
    </location>
</feature>
<feature type="helix" evidence="21">
    <location>
        <begin position="686"/>
        <end position="709"/>
    </location>
</feature>
<feature type="helix" evidence="21">
    <location>
        <begin position="716"/>
        <end position="731"/>
    </location>
</feature>
<feature type="turn" evidence="21">
    <location>
        <begin position="751"/>
        <end position="753"/>
    </location>
</feature>
<feature type="helix" evidence="21">
    <location>
        <begin position="761"/>
        <end position="772"/>
    </location>
</feature>
<feature type="helix" evidence="21">
    <location>
        <begin position="775"/>
        <end position="780"/>
    </location>
</feature>
<feature type="helix" evidence="21">
    <location>
        <begin position="789"/>
        <end position="806"/>
    </location>
</feature>
<feature type="turn" evidence="21">
    <location>
        <begin position="807"/>
        <end position="812"/>
    </location>
</feature>
<feature type="helix" evidence="21">
    <location>
        <begin position="815"/>
        <end position="824"/>
    </location>
</feature>
<feature type="helix" evidence="21">
    <location>
        <begin position="832"/>
        <end position="845"/>
    </location>
</feature>
<feature type="helix" evidence="21">
    <location>
        <begin position="851"/>
        <end position="861"/>
    </location>
</feature>
<feature type="helix" evidence="21">
    <location>
        <begin position="865"/>
        <end position="868"/>
    </location>
</feature>
<feature type="helix" evidence="21">
    <location>
        <begin position="874"/>
        <end position="876"/>
    </location>
</feature>
<feature type="helix" evidence="21">
    <location>
        <begin position="880"/>
        <end position="882"/>
    </location>
</feature>
<feature type="helix" evidence="21">
    <location>
        <begin position="883"/>
        <end position="899"/>
    </location>
</feature>
<feature type="helix" evidence="21">
    <location>
        <begin position="910"/>
        <end position="926"/>
    </location>
</feature>
<feature type="helix" evidence="21">
    <location>
        <begin position="933"/>
        <end position="939"/>
    </location>
</feature>
<feature type="helix" evidence="21">
    <location>
        <begin position="942"/>
        <end position="944"/>
    </location>
</feature>
<feature type="helix" evidence="21">
    <location>
        <begin position="948"/>
        <end position="958"/>
    </location>
</feature>
<feature type="strand" evidence="21">
    <location>
        <begin position="959"/>
        <end position="962"/>
    </location>
</feature>
<feature type="strand" evidence="21">
    <location>
        <begin position="966"/>
        <end position="968"/>
    </location>
</feature>
<feature type="strand" evidence="21">
    <location>
        <begin position="972"/>
        <end position="975"/>
    </location>
</feature>
<feature type="helix" evidence="21">
    <location>
        <begin position="978"/>
        <end position="982"/>
    </location>
</feature>
<feature type="helix" evidence="21">
    <location>
        <begin position="988"/>
        <end position="990"/>
    </location>
</feature>
<feature type="helix" evidence="21">
    <location>
        <begin position="996"/>
        <end position="1006"/>
    </location>
</feature>
<feature type="strand" evidence="21">
    <location>
        <begin position="1007"/>
        <end position="1010"/>
    </location>
</feature>
<feature type="turn" evidence="21">
    <location>
        <begin position="1011"/>
        <end position="1015"/>
    </location>
</feature>
<feature type="helix" evidence="21">
    <location>
        <begin position="1029"/>
        <end position="1035"/>
    </location>
</feature>
<feature type="helix" evidence="21">
    <location>
        <begin position="1036"/>
        <end position="1039"/>
    </location>
</feature>
<feature type="helix" evidence="21">
    <location>
        <begin position="1041"/>
        <end position="1057"/>
    </location>
</feature>
<feature type="helix" evidence="21">
    <location>
        <begin position="1063"/>
        <end position="1081"/>
    </location>
</feature>
<feature type="helix" evidence="21">
    <location>
        <begin position="1089"/>
        <end position="1092"/>
    </location>
</feature>
<feature type="helix" evidence="21">
    <location>
        <begin position="1095"/>
        <end position="1103"/>
    </location>
</feature>
<feature type="helix" evidence="21">
    <location>
        <begin position="1112"/>
        <end position="1128"/>
    </location>
</feature>
<feature type="helix" evidence="21">
    <location>
        <begin position="1130"/>
        <end position="1140"/>
    </location>
</feature>
<feature type="helix" evidence="21">
    <location>
        <begin position="1142"/>
        <end position="1152"/>
    </location>
</feature>
<feature type="helix" evidence="21">
    <location>
        <begin position="1164"/>
        <end position="1193"/>
    </location>
</feature>
<feature type="turn" evidence="21">
    <location>
        <begin position="1194"/>
        <end position="1196"/>
    </location>
</feature>
<feature type="strand" evidence="21">
    <location>
        <begin position="1221"/>
        <end position="1223"/>
    </location>
</feature>
<feature type="strand" evidence="21">
    <location>
        <begin position="1235"/>
        <end position="1240"/>
    </location>
</feature>
<feature type="helix" evidence="21">
    <location>
        <begin position="1252"/>
        <end position="1255"/>
    </location>
</feature>
<feature type="helix" evidence="21">
    <location>
        <begin position="1274"/>
        <end position="1283"/>
    </location>
</feature>
<feature type="strand" evidence="21">
    <location>
        <begin position="1290"/>
        <end position="1294"/>
    </location>
</feature>
<feature type="helix" evidence="21">
    <location>
        <begin position="1301"/>
        <end position="1310"/>
    </location>
</feature>
<feature type="strand" evidence="21">
    <location>
        <begin position="1317"/>
        <end position="1319"/>
    </location>
</feature>
<feature type="turn" evidence="21">
    <location>
        <begin position="1321"/>
        <end position="1323"/>
    </location>
</feature>
<feature type="helix" evidence="21">
    <location>
        <begin position="1345"/>
        <end position="1350"/>
    </location>
</feature>
<feature type="helix" evidence="21">
    <location>
        <begin position="1355"/>
        <end position="1358"/>
    </location>
</feature>
<feature type="helix" evidence="21">
    <location>
        <begin position="1359"/>
        <end position="1361"/>
    </location>
</feature>
<feature type="helix" evidence="21">
    <location>
        <begin position="1367"/>
        <end position="1383"/>
    </location>
</feature>
<feature type="strand" evidence="21">
    <location>
        <begin position="1385"/>
        <end position="1387"/>
    </location>
</feature>
<feature type="helix" evidence="21">
    <location>
        <begin position="1389"/>
        <end position="1393"/>
    </location>
</feature>
<feature type="strand" evidence="21">
    <location>
        <begin position="1394"/>
        <end position="1396"/>
    </location>
</feature>
<feature type="helix" evidence="21">
    <location>
        <begin position="1399"/>
        <end position="1401"/>
    </location>
</feature>
<feature type="helix" evidence="21">
    <location>
        <begin position="1402"/>
        <end position="1420"/>
    </location>
</feature>
<feature type="helix" evidence="21">
    <location>
        <begin position="1421"/>
        <end position="1423"/>
    </location>
</feature>
<feature type="turn" evidence="21">
    <location>
        <begin position="1427"/>
        <end position="1434"/>
    </location>
</feature>
<feature type="helix" evidence="21">
    <location>
        <begin position="1436"/>
        <end position="1455"/>
    </location>
</feature>
<feature type="helix" evidence="21">
    <location>
        <begin position="1478"/>
        <end position="1488"/>
    </location>
</feature>
<feature type="strand" evidence="21">
    <location>
        <begin position="1490"/>
        <end position="1492"/>
    </location>
</feature>
<feature type="helix" evidence="21">
    <location>
        <begin position="1494"/>
        <end position="1513"/>
    </location>
</feature>
<feature type="turn" evidence="21">
    <location>
        <begin position="1519"/>
        <end position="1521"/>
    </location>
</feature>
<feature type="helix" evidence="21">
    <location>
        <begin position="1522"/>
        <end position="1533"/>
    </location>
</feature>
<feature type="helix" evidence="21">
    <location>
        <begin position="1541"/>
        <end position="1550"/>
    </location>
</feature>
<feature type="helix" evidence="21">
    <location>
        <begin position="1562"/>
        <end position="1593"/>
    </location>
</feature>
<feature type="strand" evidence="21">
    <location>
        <begin position="1596"/>
        <end position="1599"/>
    </location>
</feature>
<feature type="helix" evidence="21">
    <location>
        <begin position="1609"/>
        <end position="1613"/>
    </location>
</feature>
<feature type="helix" evidence="21">
    <location>
        <begin position="1620"/>
        <end position="1629"/>
    </location>
</feature>
<feature type="strand" evidence="21">
    <location>
        <begin position="1630"/>
        <end position="1634"/>
    </location>
</feature>
<feature type="helix" evidence="21">
    <location>
        <begin position="1635"/>
        <end position="1640"/>
    </location>
</feature>
<feature type="helix" evidence="21">
    <location>
        <begin position="1649"/>
        <end position="1651"/>
    </location>
</feature>
<feature type="helix" evidence="21">
    <location>
        <begin position="1673"/>
        <end position="1676"/>
    </location>
</feature>
<feature type="turn" evidence="21">
    <location>
        <begin position="1677"/>
        <end position="1680"/>
    </location>
</feature>
<feature type="strand" evidence="21">
    <location>
        <begin position="1687"/>
        <end position="1689"/>
    </location>
</feature>
<feature type="helix" evidence="21">
    <location>
        <begin position="1694"/>
        <end position="1696"/>
    </location>
</feature>
<feature type="strand" evidence="21">
    <location>
        <begin position="1700"/>
        <end position="1703"/>
    </location>
</feature>
<feature type="turn" evidence="21">
    <location>
        <begin position="1704"/>
        <end position="1706"/>
    </location>
</feature>
<feature type="strand" evidence="21">
    <location>
        <begin position="1709"/>
        <end position="1711"/>
    </location>
</feature>
<feature type="helix" evidence="21">
    <location>
        <begin position="1716"/>
        <end position="1719"/>
    </location>
</feature>
<feature type="helix" evidence="21">
    <location>
        <begin position="1721"/>
        <end position="1724"/>
    </location>
</feature>
<feature type="strand" evidence="21">
    <location>
        <begin position="1725"/>
        <end position="1727"/>
    </location>
</feature>
<feature type="strand" evidence="21">
    <location>
        <begin position="1729"/>
        <end position="1736"/>
    </location>
</feature>
<feature type="turn" evidence="21">
    <location>
        <begin position="1737"/>
        <end position="1740"/>
    </location>
</feature>
<feature type="strand" evidence="21">
    <location>
        <begin position="1741"/>
        <end position="1746"/>
    </location>
</feature>
<feature type="turn" evidence="21">
    <location>
        <begin position="1747"/>
        <end position="1750"/>
    </location>
</feature>
<feature type="strand" evidence="21">
    <location>
        <begin position="1751"/>
        <end position="1756"/>
    </location>
</feature>
<feature type="strand" evidence="21">
    <location>
        <begin position="1758"/>
        <end position="1761"/>
    </location>
</feature>
<feature type="helix" evidence="21">
    <location>
        <begin position="1768"/>
        <end position="1771"/>
    </location>
</feature>
<feature type="helix" evidence="21">
    <location>
        <begin position="1772"/>
        <end position="1774"/>
    </location>
</feature>
<feature type="strand" evidence="21">
    <location>
        <begin position="1777"/>
        <end position="1779"/>
    </location>
</feature>
<feature type="helix" evidence="21">
    <location>
        <begin position="1781"/>
        <end position="1792"/>
    </location>
</feature>
<feature type="turn" evidence="21">
    <location>
        <begin position="1793"/>
        <end position="1795"/>
    </location>
</feature>
<feature type="helix" evidence="21">
    <location>
        <begin position="1796"/>
        <end position="1804"/>
    </location>
</feature>
<feature type="helix" evidence="21">
    <location>
        <begin position="1806"/>
        <end position="1811"/>
    </location>
</feature>
<organism>
    <name type="scientific">Saccharomyces cerevisiae (strain ATCC 204508 / S288c)</name>
    <name type="common">Baker's yeast</name>
    <dbReference type="NCBI Taxonomy" id="559292"/>
    <lineage>
        <taxon>Eukaryota</taxon>
        <taxon>Fungi</taxon>
        <taxon>Dikarya</taxon>
        <taxon>Ascomycota</taxon>
        <taxon>Saccharomycotina</taxon>
        <taxon>Saccharomycetes</taxon>
        <taxon>Saccharomycetales</taxon>
        <taxon>Saccharomycetaceae</taxon>
        <taxon>Saccharomyces</taxon>
    </lineage>
</organism>
<evidence type="ECO:0000255" key="1">
    <source>
        <dbReference type="PROSITE-ProRule" id="PRU00508"/>
    </source>
</evidence>
<evidence type="ECO:0000256" key="2">
    <source>
        <dbReference type="SAM" id="MobiDB-lite"/>
    </source>
</evidence>
<evidence type="ECO:0000269" key="3">
    <source>
    </source>
</evidence>
<evidence type="ECO:0000269" key="4">
    <source>
    </source>
</evidence>
<evidence type="ECO:0000269" key="5">
    <source>
    </source>
</evidence>
<evidence type="ECO:0000269" key="6">
    <source>
    </source>
</evidence>
<evidence type="ECO:0000269" key="7">
    <source>
    </source>
</evidence>
<evidence type="ECO:0000269" key="8">
    <source>
    </source>
</evidence>
<evidence type="ECO:0000303" key="9">
    <source>
    </source>
</evidence>
<evidence type="ECO:0000305" key="10"/>
<evidence type="ECO:0000305" key="11">
    <source>
    </source>
</evidence>
<evidence type="ECO:0000305" key="12">
    <source>
    </source>
</evidence>
<evidence type="ECO:0000312" key="13">
    <source>
        <dbReference type="SGD" id="S000003416"/>
    </source>
</evidence>
<evidence type="ECO:0007744" key="14">
    <source>
        <dbReference type="PDB" id="7MEX"/>
    </source>
</evidence>
<evidence type="ECO:0007744" key="15">
    <source>
        <dbReference type="PDB" id="7MEY"/>
    </source>
</evidence>
<evidence type="ECO:0007744" key="16">
    <source>
    </source>
</evidence>
<evidence type="ECO:0007744" key="17">
    <source>
    </source>
</evidence>
<evidence type="ECO:0007744" key="18">
    <source>
    </source>
</evidence>
<evidence type="ECO:0007829" key="19">
    <source>
        <dbReference type="PDB" id="3NIS"/>
    </source>
</evidence>
<evidence type="ECO:0007829" key="20">
    <source>
        <dbReference type="PDB" id="6KGI"/>
    </source>
</evidence>
<evidence type="ECO:0007829" key="21">
    <source>
        <dbReference type="PDB" id="7MEX"/>
    </source>
</evidence>
<gene>
    <name evidence="9 13" type="primary">UBR1</name>
    <name type="synonym">PTR1</name>
    <name type="ordered locus">YGR184C</name>
    <name type="ORF">G7168</name>
</gene>
<keyword id="KW-0002">3D-structure</keyword>
<keyword id="KW-0479">Metal-binding</keyword>
<keyword id="KW-0597">Phosphoprotein</keyword>
<keyword id="KW-1185">Reference proteome</keyword>
<keyword id="KW-0808">Transferase</keyword>
<keyword id="KW-0833">Ubl conjugation pathway</keyword>
<keyword id="KW-0862">Zinc</keyword>
<keyword id="KW-0863">Zinc-finger</keyword>
<comment type="function">
    <text evidence="3 5 6 7 8">Ubiquitin ligase protein which is a component of the N-end rule pathway (PubMed:10581257, PubMed:18566452, PubMed:19041308, PubMed:2209542, PubMed:34789879). Recognizes and binds to proteins bearing specific N-terminal residues that are destabilizing according to the N-end rule, leading to their ubiquitination and subsequent degradation (PubMed:10581257, PubMed:18566452, PubMed:19041308, PubMed:2209542, PubMed:34789879). Recognizes both type-1 and type-2 N-degrons, containing positively charged amino acids (Arg, Lys and His) and bulky and hydrophobic amino acids, respectively (PubMed:18566452, PubMed:34789879).</text>
</comment>
<comment type="catalytic activity">
    <reaction evidence="3 5 8">
        <text>S-ubiquitinyl-[E2 ubiquitin-conjugating enzyme]-L-cysteine + [acceptor protein]-L-lysine = [E2 ubiquitin-conjugating enzyme]-L-cysteine + N(6)-ubiquitinyl-[acceptor protein]-L-lysine.</text>
        <dbReference type="EC" id="2.3.2.27"/>
    </reaction>
</comment>
<comment type="pathway">
    <text evidence="3 5 7 8">Protein modification; protein ubiquitination.</text>
</comment>
<comment type="subunit">
    <text evidence="3 4 8">Interacts with UBC2 (PubMed:10581257, PubMed:34789879). Interacts with RPN2, RPT1 and RPT6 from the 26S proteasome (PubMed:10688918).</text>
</comment>
<comment type="interaction">
    <interactant intactId="EBI-19909">
        <id>P19812</id>
    </interactant>
    <interactant intactId="EBI-10517">
        <id>P21965</id>
        <label>MCK1</label>
    </interactant>
    <organismsDiffer>false</organismsDiffer>
    <experiments>3</experiments>
</comment>
<comment type="interaction">
    <interactant intactId="EBI-19909">
        <id>P19812</id>
    </interactant>
    <interactant intactId="EBI-10873">
        <id>P26188</id>
        <label>MGT1</label>
    </interactant>
    <organismsDiffer>false</organismsDiffer>
    <experiments>2</experiments>
</comment>
<comment type="interaction">
    <interactant intactId="EBI-19909">
        <id>P19812</id>
    </interactant>
    <interactant intactId="EBI-19722">
        <id>P06104</id>
        <label>RAD6</label>
    </interactant>
    <organismsDiffer>false</organismsDiffer>
    <experiments>5</experiments>
</comment>
<comment type="interaction">
    <interactant intactId="EBI-19909">
        <id>P19812</id>
    </interactant>
    <interactant intactId="EBI-15919">
        <id>P32565</id>
        <label>RPN2</label>
    </interactant>
    <organismsDiffer>false</organismsDiffer>
    <experiments>2</experiments>
</comment>
<comment type="interaction">
    <interactant intactId="EBI-19909">
        <id>P19812</id>
    </interactant>
    <interactant intactId="EBI-13910">
        <id>P33299</id>
        <label>RPT1</label>
    </interactant>
    <organismsDiffer>false</organismsDiffer>
    <experiments>2</experiments>
</comment>
<comment type="interaction">
    <interactant intactId="EBI-19909">
        <id>P19812</id>
    </interactant>
    <interactant intactId="EBI-13914">
        <id>Q01939</id>
        <label>RPT6</label>
    </interactant>
    <organismsDiffer>false</organismsDiffer>
    <experiments>4</experiments>
</comment>
<comment type="interaction">
    <interactant intactId="EBI-19909">
        <id>P19812</id>
    </interactant>
    <interactant intactId="EBI-4718">
        <id>P23291</id>
        <label>YCK1</label>
    </interactant>
    <organismsDiffer>false</organismsDiffer>
    <experiments>2</experiments>
</comment>
<comment type="similarity">
    <text evidence="10">Belongs to the E3 ubiquitin-protein ligase UBR1-like family.</text>
</comment>
<proteinExistence type="evidence at protein level"/>
<protein>
    <recommendedName>
        <fullName evidence="10">E3 ubiquitin-protein ligase UBR1</fullName>
        <ecNumber evidence="3 8">2.3.2.27</ecNumber>
    </recommendedName>
    <alternativeName>
        <fullName>N-end-recognizing protein</fullName>
    </alternativeName>
    <alternativeName>
        <fullName>N-recognin-1</fullName>
    </alternativeName>
</protein>
<reference key="1">
    <citation type="journal article" date="1990" name="EMBO J.">
        <title>The recognition component of the N-end rule pathway.</title>
        <authorList>
            <person name="Bartel B."/>
            <person name="Wuenning I."/>
            <person name="Varshavsky A."/>
        </authorList>
    </citation>
    <scope>NUCLEOTIDE SEQUENCE [GENOMIC DNA]</scope>
    <scope>FUNCTION</scope>
    <scope>PATHWAY</scope>
    <source>
        <strain>S288c / GRF88</strain>
    </source>
</reference>
<reference key="2">
    <citation type="journal article" date="1997" name="Yeast">
        <title>DNA sequence analysis of a 23,002 bp DNA fragment of the right arm of Saccharomyces cerevisiae chromosome VII.</title>
        <authorList>
            <person name="Arroyo J."/>
            <person name="Garcia-Gonzalez M."/>
            <person name="Garcia-Saez M.I."/>
            <person name="Sanchez-Perez M."/>
            <person name="Nombela C."/>
        </authorList>
    </citation>
    <scope>NUCLEOTIDE SEQUENCE [GENOMIC DNA]</scope>
    <source>
        <strain>ATCC 204508 / S288c</strain>
    </source>
</reference>
<reference key="3">
    <citation type="journal article" date="1997" name="Nature">
        <title>The nucleotide sequence of Saccharomyces cerevisiae chromosome VII.</title>
        <authorList>
            <person name="Tettelin H."/>
            <person name="Agostoni-Carbone M.L."/>
            <person name="Albermann K."/>
            <person name="Albers M."/>
            <person name="Arroyo J."/>
            <person name="Backes U."/>
            <person name="Barreiros T."/>
            <person name="Bertani I."/>
            <person name="Bjourson A.J."/>
            <person name="Brueckner M."/>
            <person name="Bruschi C.V."/>
            <person name="Carignani G."/>
            <person name="Castagnoli L."/>
            <person name="Cerdan E."/>
            <person name="Clemente M.L."/>
            <person name="Coblenz A."/>
            <person name="Coglievina M."/>
            <person name="Coissac E."/>
            <person name="Defoor E."/>
            <person name="Del Bino S."/>
            <person name="Delius H."/>
            <person name="Delneri D."/>
            <person name="de Wergifosse P."/>
            <person name="Dujon B."/>
            <person name="Durand P."/>
            <person name="Entian K.-D."/>
            <person name="Eraso P."/>
            <person name="Escribano V."/>
            <person name="Fabiani L."/>
            <person name="Fartmann B."/>
            <person name="Feroli F."/>
            <person name="Feuermann M."/>
            <person name="Frontali L."/>
            <person name="Garcia-Gonzalez M."/>
            <person name="Garcia-Saez M.I."/>
            <person name="Goffeau A."/>
            <person name="Guerreiro P."/>
            <person name="Hani J."/>
            <person name="Hansen M."/>
            <person name="Hebling U."/>
            <person name="Hernandez K."/>
            <person name="Heumann K."/>
            <person name="Hilger F."/>
            <person name="Hofmann B."/>
            <person name="Indge K.J."/>
            <person name="James C.M."/>
            <person name="Klima R."/>
            <person name="Koetter P."/>
            <person name="Kramer B."/>
            <person name="Kramer W."/>
            <person name="Lauquin G."/>
            <person name="Leuther H."/>
            <person name="Louis E.J."/>
            <person name="Maillier E."/>
            <person name="Marconi A."/>
            <person name="Martegani E."/>
            <person name="Mazon M.J."/>
            <person name="Mazzoni C."/>
            <person name="McReynolds A.D.K."/>
            <person name="Melchioretto P."/>
            <person name="Mewes H.-W."/>
            <person name="Minenkova O."/>
            <person name="Mueller-Auer S."/>
            <person name="Nawrocki A."/>
            <person name="Netter P."/>
            <person name="Neu R."/>
            <person name="Nombela C."/>
            <person name="Oliver S.G."/>
            <person name="Panzeri L."/>
            <person name="Paoluzi S."/>
            <person name="Plevani P."/>
            <person name="Portetelle D."/>
            <person name="Portillo F."/>
            <person name="Potier S."/>
            <person name="Purnelle B."/>
            <person name="Rieger M."/>
            <person name="Riles L."/>
            <person name="Rinaldi T."/>
            <person name="Robben J."/>
            <person name="Rodrigues-Pousada C."/>
            <person name="Rodriguez-Belmonte E."/>
            <person name="Rodriguez-Torres A.M."/>
            <person name="Rose M."/>
            <person name="Ruzzi M."/>
            <person name="Saliola M."/>
            <person name="Sanchez-Perez M."/>
            <person name="Schaefer B."/>
            <person name="Schaefer M."/>
            <person name="Scharfe M."/>
            <person name="Schmidheini T."/>
            <person name="Schreer A."/>
            <person name="Skala J."/>
            <person name="Souciet J.-L."/>
            <person name="Steensma H.Y."/>
            <person name="Talla E."/>
            <person name="Thierry A."/>
            <person name="Vandenbol M."/>
            <person name="van der Aart Q.J.M."/>
            <person name="Van Dyck L."/>
            <person name="Vanoni M."/>
            <person name="Verhasselt P."/>
            <person name="Voet M."/>
            <person name="Volckaert G."/>
            <person name="Wambutt R."/>
            <person name="Watson M.D."/>
            <person name="Weber N."/>
            <person name="Wedler E."/>
            <person name="Wedler H."/>
            <person name="Wipfli P."/>
            <person name="Wolf K."/>
            <person name="Wright L.F."/>
            <person name="Zaccaria P."/>
            <person name="Zimmermann M."/>
            <person name="Zollner A."/>
            <person name="Kleine K."/>
        </authorList>
    </citation>
    <scope>NUCLEOTIDE SEQUENCE [LARGE SCALE GENOMIC DNA]</scope>
    <source>
        <strain>ATCC 204508 / S288c</strain>
    </source>
</reference>
<reference key="4">
    <citation type="journal article" date="2014" name="G3 (Bethesda)">
        <title>The reference genome sequence of Saccharomyces cerevisiae: Then and now.</title>
        <authorList>
            <person name="Engel S.R."/>
            <person name="Dietrich F.S."/>
            <person name="Fisk D.G."/>
            <person name="Binkley G."/>
            <person name="Balakrishnan R."/>
            <person name="Costanzo M.C."/>
            <person name="Dwight S.S."/>
            <person name="Hitz B.C."/>
            <person name="Karra K."/>
            <person name="Nash R.S."/>
            <person name="Weng S."/>
            <person name="Wong E.D."/>
            <person name="Lloyd P."/>
            <person name="Skrzypek M.S."/>
            <person name="Miyasato S.R."/>
            <person name="Simison M."/>
            <person name="Cherry J.M."/>
        </authorList>
    </citation>
    <scope>GENOME REANNOTATION</scope>
    <source>
        <strain>ATCC 204508 / S288c</strain>
    </source>
</reference>
<reference key="5">
    <citation type="journal article" date="2008" name="FEBS Lett.">
        <title>Degradation of misfolded protein in the cytoplasm is mediated by the ubiquitin ligase Ubr1.</title>
        <authorList>
            <person name="Eisele F."/>
            <person name="Wolf D.H."/>
        </authorList>
    </citation>
    <scope>FUNCTION</scope>
</reference>
<reference key="6">
    <citation type="journal article" date="2008" name="J. Biol. Chem.">
        <title>Substrate-binding sites of UBR1, the ubiquitin ligase of the N-end rule pathway.</title>
        <authorList>
            <person name="Xia Z."/>
            <person name="Webster A."/>
            <person name="Du F."/>
            <person name="Piatkov K."/>
            <person name="Ghislain M."/>
            <person name="Varshavsky A."/>
        </authorList>
    </citation>
    <scope>FUNCTION</scope>
    <scope>CATALYTIC ACTIVITY</scope>
    <scope>ALTERNATIVE SPLICING</scope>
    <scope>MUTAGENESIS OF 145-CYS-VAL-146; GLY-173 AND ASP-176</scope>
</reference>
<reference key="7">
    <citation type="journal article" date="1999" name="EMBO J.">
        <title>The E2-E3 interaction in the N-end rule pathway: the RING-H2 finger of E3 is required for the synthesis of multiubiquitin chain.</title>
        <authorList>
            <person name="Xie Y."/>
            <person name="Varshavsky A."/>
        </authorList>
    </citation>
    <scope>FUNCTION</scope>
    <scope>CATALYTIC ACTIVITY</scope>
    <scope>INTERACTION WITH UBC2</scope>
    <scope>MUTAGENESIS OF VAL-313; ASP-318; HIS-321; PRO-406; GLU-560; LYS-1168; ARG-1169; LYS-1173; CYS-1220; CYS-1223; CYS-1295; HIS-1297 AND CYS-1320</scope>
</reference>
<reference key="8">
    <citation type="journal article" date="2000" name="Proc. Natl. Acad. Sci. U.S.A.">
        <title>Physical association of ubiquitin ligases and the 26S proteasome.</title>
        <authorList>
            <person name="Xie Y."/>
            <person name="Varshavsky A."/>
        </authorList>
    </citation>
    <scope>INTERACTION WITH RPN2; RPT1 AND RPT6</scope>
</reference>
<reference key="9">
    <citation type="journal article" date="2007" name="J. Proteome Res.">
        <title>Large-scale phosphorylation analysis of alpha-factor-arrested Saccharomyces cerevisiae.</title>
        <authorList>
            <person name="Li X."/>
            <person name="Gerber S.A."/>
            <person name="Rudner A.D."/>
            <person name="Beausoleil S.A."/>
            <person name="Haas W."/>
            <person name="Villen J."/>
            <person name="Elias J.E."/>
            <person name="Gygi S.P."/>
        </authorList>
    </citation>
    <scope>PHOSPHORYLATION [LARGE SCALE ANALYSIS] AT SER-296 AND SER-300</scope>
    <scope>IDENTIFICATION BY MASS SPECTROMETRY [LARGE SCALE ANALYSIS]</scope>
    <source>
        <strain>ADR376</strain>
    </source>
</reference>
<reference key="10">
    <citation type="journal article" date="2008" name="Mol. Cell. Proteomics">
        <title>A multidimensional chromatography technology for in-depth phosphoproteome analysis.</title>
        <authorList>
            <person name="Albuquerque C.P."/>
            <person name="Smolka M.B."/>
            <person name="Payne S.H."/>
            <person name="Bafna V."/>
            <person name="Eng J."/>
            <person name="Zhou H."/>
        </authorList>
    </citation>
    <scope>PHOSPHORYLATION [LARGE SCALE ANALYSIS] AT SER-296</scope>
    <scope>IDENTIFICATION BY MASS SPECTROMETRY [LARGE SCALE ANALYSIS]</scope>
</reference>
<reference key="11">
    <citation type="journal article" date="2009" name="Science">
        <title>Global analysis of Cdk1 substrate phosphorylation sites provides insights into evolution.</title>
        <authorList>
            <person name="Holt L.J."/>
            <person name="Tuch B.B."/>
            <person name="Villen J."/>
            <person name="Johnson A.D."/>
            <person name="Gygi S.P."/>
            <person name="Morgan D.O."/>
        </authorList>
    </citation>
    <scope>PHOSPHORYLATION [LARGE SCALE ANALYSIS] AT SER-296; SER-300 AND SER-1938</scope>
    <scope>IDENTIFICATION BY MASS SPECTROMETRY [LARGE SCALE ANALYSIS]</scope>
</reference>
<reference key="12">
    <citation type="journal article" date="2012" name="Proc. Natl. Acad. Sci. U.S.A.">
        <title>N-terminal acetylome analyses and functional insights of the N-terminal acetyltransferase NatB.</title>
        <authorList>
            <person name="Van Damme P."/>
            <person name="Lasa M."/>
            <person name="Polevoda B."/>
            <person name="Gazquez C."/>
            <person name="Elosegui-Artola A."/>
            <person name="Kim D.S."/>
            <person name="De Juan-Pardo E."/>
            <person name="Demeyer K."/>
            <person name="Hole K."/>
            <person name="Larrea E."/>
            <person name="Timmerman E."/>
            <person name="Prieto J."/>
            <person name="Arnesen T."/>
            <person name="Sherman F."/>
            <person name="Gevaert K."/>
            <person name="Aldabe R."/>
        </authorList>
    </citation>
    <scope>IDENTIFICATION BY MASS SPECTROMETRY [LARGE SCALE ANALYSIS]</scope>
</reference>
<reference evidence="14 15" key="13">
    <citation type="journal article" date="2021" name="Nature">
        <title>Structural insights into Ubr1-mediated N-degron polyubiquitination.</title>
        <authorList>
            <person name="Pan M."/>
            <person name="Zheng Q."/>
            <person name="Wang T."/>
            <person name="Liang L."/>
            <person name="Mao J."/>
            <person name="Zuo C."/>
            <person name="Ding R."/>
            <person name="Ai H."/>
            <person name="Xie Y."/>
            <person name="Si D."/>
            <person name="Yu Y."/>
            <person name="Liu L."/>
            <person name="Zhao M."/>
        </authorList>
    </citation>
    <scope>STRUCTURE BY ELECTRON MICROSCOPY (3.35 ANGSTROMS) IN COMPLEX WITH ZINC AND UBC2</scope>
    <scope>FUNCTION</scope>
    <scope>CATALYTIC ACTIVITY</scope>
    <scope>PATHWAY</scope>
    <scope>INTERACTION WITH UBC2</scope>
    <scope>MUTAGENESIS OF HIS-161; 678-HIS--HIS-681; TYR-933; HIS-1175; PHE-1183; GLN-1186; PHE-1190 AND HIS-1763</scope>
</reference>